<accession>P9WH09</accession>
<accession>L0TEU1</accession>
<accession>P96871</accession>
<accession>Q7D5T1</accession>
<protein>
    <recommendedName>
        <fullName evidence="1">dTDP-4-dehydrorhamnose reductase</fullName>
        <ecNumber evidence="1">1.1.1.133</ecNumber>
    </recommendedName>
    <alternativeName>
        <fullName evidence="1">dTDP-4-keto-L-rhamnose reductase</fullName>
    </alternativeName>
    <alternativeName>
        <fullName evidence="4">dTDP-6-deoxy-L-lyxo-4-hexulose reductase</fullName>
    </alternativeName>
    <alternativeName>
        <fullName evidence="1">dTDP-6-deoxy-L-mannose dehydrogenase</fullName>
    </alternativeName>
    <alternativeName>
        <fullName evidence="1">dTDP-L-rhamnose synthase</fullName>
    </alternativeName>
</protein>
<organism>
    <name type="scientific">Mycobacterium tuberculosis (strain ATCC 25618 / H37Rv)</name>
    <dbReference type="NCBI Taxonomy" id="83332"/>
    <lineage>
        <taxon>Bacteria</taxon>
        <taxon>Bacillati</taxon>
        <taxon>Actinomycetota</taxon>
        <taxon>Actinomycetes</taxon>
        <taxon>Mycobacteriales</taxon>
        <taxon>Mycobacteriaceae</taxon>
        <taxon>Mycobacterium</taxon>
        <taxon>Mycobacterium tuberculosis complex</taxon>
    </lineage>
</organism>
<proteinExistence type="evidence at protein level"/>
<reference key="1">
    <citation type="journal article" date="1998" name="Nature">
        <title>Deciphering the biology of Mycobacterium tuberculosis from the complete genome sequence.</title>
        <authorList>
            <person name="Cole S.T."/>
            <person name="Brosch R."/>
            <person name="Parkhill J."/>
            <person name="Garnier T."/>
            <person name="Churcher C.M."/>
            <person name="Harris D.E."/>
            <person name="Gordon S.V."/>
            <person name="Eiglmeier K."/>
            <person name="Gas S."/>
            <person name="Barry C.E. III"/>
            <person name="Tekaia F."/>
            <person name="Badcock K."/>
            <person name="Basham D."/>
            <person name="Brown D."/>
            <person name="Chillingworth T."/>
            <person name="Connor R."/>
            <person name="Davies R.M."/>
            <person name="Devlin K."/>
            <person name="Feltwell T."/>
            <person name="Gentles S."/>
            <person name="Hamlin N."/>
            <person name="Holroyd S."/>
            <person name="Hornsby T."/>
            <person name="Jagels K."/>
            <person name="Krogh A."/>
            <person name="McLean J."/>
            <person name="Moule S."/>
            <person name="Murphy L.D."/>
            <person name="Oliver S."/>
            <person name="Osborne J."/>
            <person name="Quail M.A."/>
            <person name="Rajandream M.A."/>
            <person name="Rogers J."/>
            <person name="Rutter S."/>
            <person name="Seeger K."/>
            <person name="Skelton S."/>
            <person name="Squares S."/>
            <person name="Squares R."/>
            <person name="Sulston J.E."/>
            <person name="Taylor K."/>
            <person name="Whitehead S."/>
            <person name="Barrell B.G."/>
        </authorList>
    </citation>
    <scope>NUCLEOTIDE SEQUENCE [LARGE SCALE GENOMIC DNA]</scope>
    <source>
        <strain>ATCC 25618 / H37Rv</strain>
    </source>
</reference>
<reference key="2">
    <citation type="journal article" date="2002" name="J. Bacteriol.">
        <title>Formation of dTDP-rhamnose is essential for growth of mycobacteria.</title>
        <authorList>
            <person name="Ma Y."/>
            <person name="Pan F."/>
            <person name="McNeil M."/>
        </authorList>
    </citation>
    <scope>FUNCTION IN DTDP-RHAMNOSE BIOSYNTHESIS</scope>
    <scope>PATHWAY</scope>
    <source>
        <strain>ATCC 25618 / H37Rv</strain>
    </source>
</reference>
<reference key="3">
    <citation type="journal article" date="2008" name="BMC Syst. Biol.">
        <title>targetTB: a target identification pipeline for Mycobacterium tuberculosis through an interactome, reactome and genome-scale structural analysis.</title>
        <authorList>
            <person name="Raman K."/>
            <person name="Yeturu K."/>
            <person name="Chandra N."/>
        </authorList>
    </citation>
    <scope>IDENTIFICATION AS A DRUG TARGET [LARGE SCALE ANALYSIS]</scope>
</reference>
<reference key="4">
    <citation type="journal article" date="2011" name="Mol. Cell. Proteomics">
        <title>Proteogenomic analysis of Mycobacterium tuberculosis by high resolution mass spectrometry.</title>
        <authorList>
            <person name="Kelkar D.S."/>
            <person name="Kumar D."/>
            <person name="Kumar P."/>
            <person name="Balakrishnan L."/>
            <person name="Muthusamy B."/>
            <person name="Yadav A.K."/>
            <person name="Shrivastava P."/>
            <person name="Marimuthu A."/>
            <person name="Anand S."/>
            <person name="Sundaram H."/>
            <person name="Kingsbury R."/>
            <person name="Harsha H.C."/>
            <person name="Nair B."/>
            <person name="Prasad T.S."/>
            <person name="Chauhan D.S."/>
            <person name="Katoch K."/>
            <person name="Katoch V.M."/>
            <person name="Kumar P."/>
            <person name="Chaerkady R."/>
            <person name="Ramachandran S."/>
            <person name="Dash D."/>
            <person name="Pandey A."/>
        </authorList>
    </citation>
    <scope>IDENTIFICATION BY MASS SPECTROMETRY [LARGE SCALE ANALYSIS]</scope>
    <source>
        <strain>ATCC 25618 / H37Rv</strain>
    </source>
</reference>
<keyword id="KW-0119">Carbohydrate metabolism</keyword>
<keyword id="KW-0460">Magnesium</keyword>
<keyword id="KW-0479">Metal-binding</keyword>
<keyword id="KW-0520">NAD</keyword>
<keyword id="KW-0521">NADP</keyword>
<keyword id="KW-0560">Oxidoreductase</keyword>
<keyword id="KW-1185">Reference proteome</keyword>
<gene>
    <name evidence="4" type="primary">rmlD</name>
    <name type="ordered locus">Rv3266c</name>
</gene>
<dbReference type="EC" id="1.1.1.133" evidence="1"/>
<dbReference type="EMBL" id="AL123456">
    <property type="protein sequence ID" value="CCP46085.1"/>
    <property type="molecule type" value="Genomic_DNA"/>
</dbReference>
<dbReference type="PIR" id="C70978">
    <property type="entry name" value="C70978"/>
</dbReference>
<dbReference type="RefSeq" id="NP_217783.1">
    <property type="nucleotide sequence ID" value="NC_000962.3"/>
</dbReference>
<dbReference type="SMR" id="P9WH09"/>
<dbReference type="FunCoup" id="P9WH09">
    <property type="interactions" value="231"/>
</dbReference>
<dbReference type="STRING" id="83332.Rv3266c"/>
<dbReference type="BindingDB" id="P9WH09"/>
<dbReference type="ChEMBL" id="CHEMBL1938225"/>
<dbReference type="PaxDb" id="83332-Rv3266c"/>
<dbReference type="DNASU" id="888704"/>
<dbReference type="GeneID" id="888704"/>
<dbReference type="KEGG" id="mtu:Rv3266c"/>
<dbReference type="KEGG" id="mtv:RVBD_3266c"/>
<dbReference type="TubercuList" id="Rv3266c"/>
<dbReference type="eggNOG" id="COG1091">
    <property type="taxonomic scope" value="Bacteria"/>
</dbReference>
<dbReference type="InParanoid" id="P9WH09"/>
<dbReference type="OrthoDB" id="9803892at2"/>
<dbReference type="PhylomeDB" id="P9WH09"/>
<dbReference type="UniPathway" id="UPA00124"/>
<dbReference type="PRO" id="PR:P9WH09"/>
<dbReference type="Proteomes" id="UP000001584">
    <property type="component" value="Chromosome"/>
</dbReference>
<dbReference type="GO" id="GO:0005829">
    <property type="term" value="C:cytosol"/>
    <property type="evidence" value="ECO:0000318"/>
    <property type="project" value="GO_Central"/>
</dbReference>
<dbReference type="GO" id="GO:0008831">
    <property type="term" value="F:dTDP-4-dehydrorhamnose reductase activity"/>
    <property type="evidence" value="ECO:0000314"/>
    <property type="project" value="MTBBASE"/>
</dbReference>
<dbReference type="GO" id="GO:0046872">
    <property type="term" value="F:metal ion binding"/>
    <property type="evidence" value="ECO:0007669"/>
    <property type="project" value="UniProtKB-KW"/>
</dbReference>
<dbReference type="GO" id="GO:0019305">
    <property type="term" value="P:dTDP-rhamnose biosynthetic process"/>
    <property type="evidence" value="ECO:0000314"/>
    <property type="project" value="MTBBASE"/>
</dbReference>
<dbReference type="GO" id="GO:0000271">
    <property type="term" value="P:polysaccharide biosynthetic process"/>
    <property type="evidence" value="ECO:0000316"/>
    <property type="project" value="UniProtKB"/>
</dbReference>
<dbReference type="CDD" id="cd05254">
    <property type="entry name" value="dTDP_HR_like_SDR_e"/>
    <property type="match status" value="1"/>
</dbReference>
<dbReference type="Gene3D" id="3.40.50.720">
    <property type="entry name" value="NAD(P)-binding Rossmann-like Domain"/>
    <property type="match status" value="1"/>
</dbReference>
<dbReference type="Gene3D" id="3.90.25.10">
    <property type="entry name" value="UDP-galactose 4-epimerase, domain 1"/>
    <property type="match status" value="1"/>
</dbReference>
<dbReference type="InterPro" id="IPR005913">
    <property type="entry name" value="dTDP_dehydrorham_reduct"/>
</dbReference>
<dbReference type="InterPro" id="IPR036291">
    <property type="entry name" value="NAD(P)-bd_dom_sf"/>
</dbReference>
<dbReference type="InterPro" id="IPR029903">
    <property type="entry name" value="RmlD-like-bd"/>
</dbReference>
<dbReference type="NCBIfam" id="TIGR01214">
    <property type="entry name" value="rmlD"/>
    <property type="match status" value="1"/>
</dbReference>
<dbReference type="PANTHER" id="PTHR10491">
    <property type="entry name" value="DTDP-4-DEHYDRORHAMNOSE REDUCTASE"/>
    <property type="match status" value="1"/>
</dbReference>
<dbReference type="PANTHER" id="PTHR10491:SF4">
    <property type="entry name" value="METHIONINE ADENOSYLTRANSFERASE 2 SUBUNIT BETA"/>
    <property type="match status" value="1"/>
</dbReference>
<dbReference type="Pfam" id="PF04321">
    <property type="entry name" value="RmlD_sub_bind"/>
    <property type="match status" value="1"/>
</dbReference>
<dbReference type="SUPFAM" id="SSF51735">
    <property type="entry name" value="NAD(P)-binding Rossmann-fold domains"/>
    <property type="match status" value="1"/>
</dbReference>
<sequence length="304" mass="32045">MAGRSERLVITGAGGQLGSHLTAQAAREGRDMLALTSSQWDITDPAAAERIIRHGDVVINCAAYTDVDGAESNEAVAYAVNATGPQHLARACARVGARLIHVSTDYVFDGDFGGAEPRPYEPTDETAPQGVYARSKLAGEQAVLAAFPEAAVVRTAWVYTGGTGKDFVAVMRRLAAGHGRVDVVDDQTGSPTYVADLAEALLALADAGVRGRVLHAANEGVVSRFGQARAVFEECGADPQRVRPVSSAQFPRPAPRSSYSALSSRQWALAGLTPLRHWRSALATALAAPANSTSIDRRLPSTRD</sequence>
<name>RMLD_MYCTU</name>
<evidence type="ECO:0000250" key="1">
    <source>
        <dbReference type="UniProtKB" id="P26392"/>
    </source>
</evidence>
<evidence type="ECO:0000269" key="2">
    <source>
    </source>
</evidence>
<evidence type="ECO:0000269" key="3">
    <source>
    </source>
</evidence>
<evidence type="ECO:0000303" key="4">
    <source>
    </source>
</evidence>
<evidence type="ECO:0000305" key="5"/>
<evidence type="ECO:0000305" key="6">
    <source>
    </source>
</evidence>
<feature type="chain" id="PRO_0000395352" description="dTDP-4-dehydrorhamnose reductase">
    <location>
        <begin position="1"/>
        <end position="304"/>
    </location>
</feature>
<feature type="active site" description="Proton donor/acceptor" evidence="1">
    <location>
        <position position="132"/>
    </location>
</feature>
<feature type="binding site" evidence="1">
    <location>
        <begin position="15"/>
        <end position="17"/>
    </location>
    <ligand>
        <name>NADH</name>
        <dbReference type="ChEBI" id="CHEBI:57945"/>
    </ligand>
</feature>
<feature type="binding site" evidence="1">
    <location>
        <begin position="16"/>
        <end position="17"/>
    </location>
    <ligand>
        <name>NADPH</name>
        <dbReference type="ChEBI" id="CHEBI:57783"/>
    </ligand>
</feature>
<feature type="binding site" evidence="1">
    <location>
        <begin position="41"/>
        <end position="42"/>
    </location>
    <ligand>
        <name>NADH</name>
        <dbReference type="ChEBI" id="CHEBI:57945"/>
    </ligand>
</feature>
<feature type="binding site" evidence="1">
    <location>
        <begin position="41"/>
        <end position="42"/>
    </location>
    <ligand>
        <name>NADPH</name>
        <dbReference type="ChEBI" id="CHEBI:57783"/>
    </ligand>
</feature>
<feature type="binding site" evidence="1">
    <location>
        <begin position="63"/>
        <end position="65"/>
    </location>
    <ligand>
        <name>NADH</name>
        <dbReference type="ChEBI" id="CHEBI:57945"/>
    </ligand>
</feature>
<feature type="binding site" evidence="1">
    <location>
        <begin position="63"/>
        <end position="65"/>
    </location>
    <ligand>
        <name>NADPH</name>
        <dbReference type="ChEBI" id="CHEBI:57783"/>
    </ligand>
</feature>
<feature type="binding site" evidence="1">
    <location>
        <begin position="104"/>
        <end position="105"/>
    </location>
    <ligand>
        <name>dTDP-beta-L-rhamnose</name>
        <dbReference type="ChEBI" id="CHEBI:57510"/>
    </ligand>
</feature>
<feature type="binding site" evidence="1">
    <location>
        <position position="132"/>
    </location>
    <ligand>
        <name>NADH</name>
        <dbReference type="ChEBI" id="CHEBI:57945"/>
    </ligand>
</feature>
<feature type="binding site" evidence="1">
    <location>
        <position position="132"/>
    </location>
    <ligand>
        <name>NADPH</name>
        <dbReference type="ChEBI" id="CHEBI:57783"/>
    </ligand>
</feature>
<feature type="binding site" evidence="1">
    <location>
        <position position="136"/>
    </location>
    <ligand>
        <name>NADH</name>
        <dbReference type="ChEBI" id="CHEBI:57945"/>
    </ligand>
</feature>
<feature type="binding site" evidence="1">
    <location>
        <position position="136"/>
    </location>
    <ligand>
        <name>NADPH</name>
        <dbReference type="ChEBI" id="CHEBI:57783"/>
    </ligand>
</feature>
<feature type="binding site" evidence="1">
    <location>
        <position position="157"/>
    </location>
    <ligand>
        <name>dTDP-beta-L-rhamnose</name>
        <dbReference type="ChEBI" id="CHEBI:57510"/>
    </ligand>
</feature>
<feature type="site" description="Could provide a fine-tuning to achieve optimal pKa matching between active site and substrate" evidence="1">
    <location>
        <position position="104"/>
    </location>
</feature>
<comment type="function">
    <text evidence="1 2">Involved in the biosynthesis of the dTDP-L-rhamnose which is a component of the critical linker, D-N-acetylglucosamine-L-rhamnose disaccharide, which connects the galactan region of arabinogalactan to peptidoglycan via a phosphodiester linkage (PubMed:12029057). Catalyzes the reduction of dTDP-6-deoxy-L-lyxo-4-hexulose to yield dTDP-L-rhamnose (By similarity).</text>
</comment>
<comment type="catalytic activity">
    <reaction evidence="1">
        <text>dTDP-beta-L-rhamnose + NADP(+) = dTDP-4-dehydro-beta-L-rhamnose + NADPH + H(+)</text>
        <dbReference type="Rhea" id="RHEA:21796"/>
        <dbReference type="ChEBI" id="CHEBI:15378"/>
        <dbReference type="ChEBI" id="CHEBI:57510"/>
        <dbReference type="ChEBI" id="CHEBI:57783"/>
        <dbReference type="ChEBI" id="CHEBI:58349"/>
        <dbReference type="ChEBI" id="CHEBI:62830"/>
        <dbReference type="EC" id="1.1.1.133"/>
    </reaction>
</comment>
<comment type="cofactor">
    <cofactor evidence="1">
        <name>Mg(2+)</name>
        <dbReference type="ChEBI" id="CHEBI:18420"/>
    </cofactor>
    <text evidence="1">Binds 1 Mg(2+) ion per monomer.</text>
</comment>
<comment type="pathway">
    <text evidence="6">Carbohydrate biosynthesis; dTDP-L-rhamnose biosynthesis.</text>
</comment>
<comment type="miscellaneous">
    <text evidence="3">Was identified as a high-confidence drug target.</text>
</comment>
<comment type="similarity">
    <text evidence="5">Belongs to the dTDP-4-dehydrorhamnose reductase family.</text>
</comment>